<gene>
    <name type="primary">ND4</name>
    <name type="synonym">ND-4</name>
</gene>
<dbReference type="EC" id="7.1.1.2"/>
<dbReference type="EMBL" id="X69067">
    <property type="protein sequence ID" value="CAA48814.1"/>
    <property type="molecule type" value="Genomic_DNA"/>
</dbReference>
<dbReference type="PIR" id="S60646">
    <property type="entry name" value="S60646"/>
</dbReference>
<dbReference type="RefSeq" id="NP_007116.1">
    <property type="nucleotide sequence ID" value="NC_001620.1"/>
</dbReference>
<dbReference type="SMR" id="Q37711"/>
<dbReference type="GeneID" id="807792"/>
<dbReference type="KEGG" id="afra:807792"/>
<dbReference type="CTD" id="4538"/>
<dbReference type="GO" id="GO:0031966">
    <property type="term" value="C:mitochondrial membrane"/>
    <property type="evidence" value="ECO:0007669"/>
    <property type="project" value="UniProtKB-SubCell"/>
</dbReference>
<dbReference type="GO" id="GO:0008137">
    <property type="term" value="F:NADH dehydrogenase (ubiquinone) activity"/>
    <property type="evidence" value="ECO:0007669"/>
    <property type="project" value="UniProtKB-EC"/>
</dbReference>
<dbReference type="GO" id="GO:0048039">
    <property type="term" value="F:ubiquinone binding"/>
    <property type="evidence" value="ECO:0007669"/>
    <property type="project" value="TreeGrafter"/>
</dbReference>
<dbReference type="GO" id="GO:0042773">
    <property type="term" value="P:ATP synthesis coupled electron transport"/>
    <property type="evidence" value="ECO:0007669"/>
    <property type="project" value="InterPro"/>
</dbReference>
<dbReference type="GO" id="GO:0015990">
    <property type="term" value="P:electron transport coupled proton transport"/>
    <property type="evidence" value="ECO:0007669"/>
    <property type="project" value="TreeGrafter"/>
</dbReference>
<dbReference type="InterPro" id="IPR003918">
    <property type="entry name" value="NADH_UbQ_OxRdtase"/>
</dbReference>
<dbReference type="InterPro" id="IPR001750">
    <property type="entry name" value="ND/Mrp_TM"/>
</dbReference>
<dbReference type="PANTHER" id="PTHR43507">
    <property type="entry name" value="NADH-UBIQUINONE OXIDOREDUCTASE CHAIN 4"/>
    <property type="match status" value="1"/>
</dbReference>
<dbReference type="PANTHER" id="PTHR43507:SF20">
    <property type="entry name" value="NADH-UBIQUINONE OXIDOREDUCTASE CHAIN 4"/>
    <property type="match status" value="1"/>
</dbReference>
<dbReference type="Pfam" id="PF00361">
    <property type="entry name" value="Proton_antipo_M"/>
    <property type="match status" value="1"/>
</dbReference>
<dbReference type="PRINTS" id="PR01437">
    <property type="entry name" value="NUOXDRDTASE4"/>
</dbReference>
<evidence type="ECO:0000250" key="1"/>
<evidence type="ECO:0000255" key="2"/>
<evidence type="ECO:0000305" key="3"/>
<protein>
    <recommendedName>
        <fullName>NADH-ubiquinone oxidoreductase chain 4</fullName>
        <ecNumber>7.1.1.2</ecNumber>
    </recommendedName>
    <alternativeName>
        <fullName>NADH dehydrogenase subunit 4</fullName>
    </alternativeName>
</protein>
<geneLocation type="mitochondrion"/>
<accession>Q37711</accession>
<proteinExistence type="inferred from homology"/>
<comment type="function">
    <text evidence="1">Core subunit of the mitochondrial membrane respiratory chain NADH dehydrogenase (Complex I) that is believed to belong to the minimal assembly required for catalysis. Complex I functions in the transfer of electrons from NADH to the respiratory chain. The immediate electron acceptor for the enzyme is believed to be ubiquinone (By similarity).</text>
</comment>
<comment type="catalytic activity">
    <reaction>
        <text>a ubiquinone + NADH + 5 H(+)(in) = a ubiquinol + NAD(+) + 4 H(+)(out)</text>
        <dbReference type="Rhea" id="RHEA:29091"/>
        <dbReference type="Rhea" id="RHEA-COMP:9565"/>
        <dbReference type="Rhea" id="RHEA-COMP:9566"/>
        <dbReference type="ChEBI" id="CHEBI:15378"/>
        <dbReference type="ChEBI" id="CHEBI:16389"/>
        <dbReference type="ChEBI" id="CHEBI:17976"/>
        <dbReference type="ChEBI" id="CHEBI:57540"/>
        <dbReference type="ChEBI" id="CHEBI:57945"/>
        <dbReference type="EC" id="7.1.1.2"/>
    </reaction>
</comment>
<comment type="subcellular location">
    <subcellularLocation>
        <location evidence="1">Mitochondrion membrane</location>
        <topology evidence="1">Multi-pass membrane protein</topology>
    </subcellularLocation>
</comment>
<comment type="similarity">
    <text evidence="3">Belongs to the complex I subunit 4 family.</text>
</comment>
<keyword id="KW-0249">Electron transport</keyword>
<keyword id="KW-0472">Membrane</keyword>
<keyword id="KW-0496">Mitochondrion</keyword>
<keyword id="KW-0520">NAD</keyword>
<keyword id="KW-0679">Respiratory chain</keyword>
<keyword id="KW-1278">Translocase</keyword>
<keyword id="KW-0812">Transmembrane</keyword>
<keyword id="KW-1133">Transmembrane helix</keyword>
<keyword id="KW-0813">Transport</keyword>
<keyword id="KW-0830">Ubiquinone</keyword>
<name>NU4M_ARTSF</name>
<organism>
    <name type="scientific">Artemia franciscana</name>
    <name type="common">Brine shrimp</name>
    <name type="synonym">Artemia sanfranciscana</name>
    <dbReference type="NCBI Taxonomy" id="6661"/>
    <lineage>
        <taxon>Eukaryota</taxon>
        <taxon>Metazoa</taxon>
        <taxon>Ecdysozoa</taxon>
        <taxon>Arthropoda</taxon>
        <taxon>Crustacea</taxon>
        <taxon>Branchiopoda</taxon>
        <taxon>Anostraca</taxon>
        <taxon>Artemiidae</taxon>
        <taxon>Artemia</taxon>
    </lineage>
</organism>
<feature type="chain" id="PRO_0000117892" description="NADH-ubiquinone oxidoreductase chain 4">
    <location>
        <begin position="1"/>
        <end position="386"/>
    </location>
</feature>
<feature type="transmembrane region" description="Helical" evidence="2">
    <location>
        <begin position="8"/>
        <end position="28"/>
    </location>
</feature>
<feature type="transmembrane region" description="Helical" evidence="2">
    <location>
        <begin position="37"/>
        <end position="57"/>
    </location>
</feature>
<feature type="transmembrane region" description="Helical" evidence="2">
    <location>
        <begin position="61"/>
        <end position="81"/>
    </location>
</feature>
<feature type="transmembrane region" description="Helical" evidence="2">
    <location>
        <begin position="91"/>
        <end position="111"/>
    </location>
</feature>
<feature type="transmembrane region" description="Helical" evidence="2">
    <location>
        <begin position="133"/>
        <end position="153"/>
    </location>
</feature>
<feature type="transmembrane region" description="Helical" evidence="2">
    <location>
        <begin position="167"/>
        <end position="187"/>
    </location>
</feature>
<feature type="transmembrane region" description="Helical" evidence="2">
    <location>
        <begin position="189"/>
        <end position="209"/>
    </location>
</feature>
<feature type="transmembrane region" description="Helical" evidence="2">
    <location>
        <begin position="219"/>
        <end position="239"/>
    </location>
</feature>
<feature type="transmembrane region" description="Helical" evidence="2">
    <location>
        <begin position="247"/>
        <end position="267"/>
    </location>
</feature>
<feature type="transmembrane region" description="Helical" evidence="2">
    <location>
        <begin position="283"/>
        <end position="303"/>
    </location>
</feature>
<feature type="transmembrane region" description="Helical" evidence="2">
    <location>
        <begin position="315"/>
        <end position="335"/>
    </location>
</feature>
<reference key="1">
    <citation type="journal article" date="1994" name="J. Mol. Evol.">
        <title>Speciation in the Artemia genus: mitochondrial DNA analysis of bisexual and parthenogenetic brine shrimps.</title>
        <authorList>
            <person name="Perez M.L."/>
            <person name="Valverde J.R."/>
            <person name="Batuecas B."/>
            <person name="Amat F."/>
            <person name="Marco R."/>
            <person name="Garesse R."/>
        </authorList>
    </citation>
    <scope>NUCLEOTIDE SEQUENCE [GENOMIC DNA]</scope>
</reference>
<sequence length="386" mass="44425">MLMYKLMSEFHLEWGITLLTLNFSYFLFNSYQIKANWPLSYSTILVSLFVLLWLTFTTQSFILFYVFFECSLIPTIILILGWGYQPERLPASYYFLFYTLLSSLPLLFIIIAHTSIYSSSFLQFWGNFMDKMIFLLAILSFLVKLPVYFAHIWLPKAHVEAPVTGSMVLAAILLKLGGYGLYLVQVLNIYSETTLMGVCLMGGIFSCLICLRQSDVKSLIAYSSVAHMSFVILGMLMSCTYTNMSSILMMVSHGICSSGLFYLSYLFYARIWSRSFLLTRSMISLFPYLCFWWLSLSFLNMGLPPSLNFFSEMYFFIGAFSLDWMVVGLSGILCFLSSCYCIYLYSSTSHGESLYIFKLISMQLKGMYNRKSSSDSVTDFNFRLLL</sequence>